<evidence type="ECO:0000255" key="1">
    <source>
        <dbReference type="HAMAP-Rule" id="MF_00188"/>
    </source>
</evidence>
<proteinExistence type="inferred from homology"/>
<protein>
    <recommendedName>
        <fullName evidence="1">Protease HtpX</fullName>
        <ecNumber evidence="1">3.4.24.-</ecNumber>
    </recommendedName>
    <alternativeName>
        <fullName evidence="1">Heat shock protein HtpX</fullName>
    </alternativeName>
</protein>
<dbReference type="EC" id="3.4.24.-" evidence="1"/>
<dbReference type="EMBL" id="CP000681">
    <property type="protein sequence ID" value="ABP76055.1"/>
    <property type="molecule type" value="Genomic_DNA"/>
</dbReference>
<dbReference type="SMR" id="A4Y7X2"/>
<dbReference type="STRING" id="319224.Sputcn32_2334"/>
<dbReference type="MEROPS" id="M48.002"/>
<dbReference type="KEGG" id="spc:Sputcn32_2334"/>
<dbReference type="eggNOG" id="COG0501">
    <property type="taxonomic scope" value="Bacteria"/>
</dbReference>
<dbReference type="HOGENOM" id="CLU_042266_1_0_6"/>
<dbReference type="GO" id="GO:0005886">
    <property type="term" value="C:plasma membrane"/>
    <property type="evidence" value="ECO:0007669"/>
    <property type="project" value="UniProtKB-SubCell"/>
</dbReference>
<dbReference type="GO" id="GO:0004222">
    <property type="term" value="F:metalloendopeptidase activity"/>
    <property type="evidence" value="ECO:0007669"/>
    <property type="project" value="UniProtKB-UniRule"/>
</dbReference>
<dbReference type="GO" id="GO:0008270">
    <property type="term" value="F:zinc ion binding"/>
    <property type="evidence" value="ECO:0007669"/>
    <property type="project" value="UniProtKB-UniRule"/>
</dbReference>
<dbReference type="GO" id="GO:0006508">
    <property type="term" value="P:proteolysis"/>
    <property type="evidence" value="ECO:0007669"/>
    <property type="project" value="UniProtKB-KW"/>
</dbReference>
<dbReference type="CDD" id="cd07335">
    <property type="entry name" value="M48B_HtpX_like"/>
    <property type="match status" value="1"/>
</dbReference>
<dbReference type="FunFam" id="3.30.2010.10:FF:000001">
    <property type="entry name" value="Protease HtpX"/>
    <property type="match status" value="1"/>
</dbReference>
<dbReference type="Gene3D" id="3.30.2010.10">
    <property type="entry name" value="Metalloproteases ('zincins'), catalytic domain"/>
    <property type="match status" value="1"/>
</dbReference>
<dbReference type="HAMAP" id="MF_00188">
    <property type="entry name" value="Pept_M48_protease_HtpX"/>
    <property type="match status" value="1"/>
</dbReference>
<dbReference type="InterPro" id="IPR050083">
    <property type="entry name" value="HtpX_protease"/>
</dbReference>
<dbReference type="InterPro" id="IPR022919">
    <property type="entry name" value="Pept_M48_protease_HtpX"/>
</dbReference>
<dbReference type="InterPro" id="IPR001915">
    <property type="entry name" value="Peptidase_M48"/>
</dbReference>
<dbReference type="NCBIfam" id="NF003965">
    <property type="entry name" value="PRK05457.1"/>
    <property type="match status" value="1"/>
</dbReference>
<dbReference type="PANTHER" id="PTHR43221">
    <property type="entry name" value="PROTEASE HTPX"/>
    <property type="match status" value="1"/>
</dbReference>
<dbReference type="PANTHER" id="PTHR43221:SF1">
    <property type="entry name" value="PROTEASE HTPX"/>
    <property type="match status" value="1"/>
</dbReference>
<dbReference type="Pfam" id="PF01435">
    <property type="entry name" value="Peptidase_M48"/>
    <property type="match status" value="1"/>
</dbReference>
<keyword id="KW-0997">Cell inner membrane</keyword>
<keyword id="KW-1003">Cell membrane</keyword>
<keyword id="KW-0378">Hydrolase</keyword>
<keyword id="KW-0472">Membrane</keyword>
<keyword id="KW-0479">Metal-binding</keyword>
<keyword id="KW-0482">Metalloprotease</keyword>
<keyword id="KW-0645">Protease</keyword>
<keyword id="KW-0812">Transmembrane</keyword>
<keyword id="KW-1133">Transmembrane helix</keyword>
<keyword id="KW-0862">Zinc</keyword>
<accession>A4Y7X2</accession>
<sequence length="287" mass="30826">MKRIFLLIATNLAVLLVASIVMSILGVNTSTMGGLLVFAAIFGFGGAFISLAISKWMAKKAMGCEVITMPRDGTERWLVETVARQAQQAGIKMPEVAIYQSPEMNAFATGPSKDNSLVAVSTGLLYGMSQDEVEAVLAHEVSHVANGDMVTLTLIQGVVNTFVIFAARVVAGIINNVVSSNDEEGEGLGMFAYMAVVFVLDMLFGILASIIVAYFSRIREYRADEGAARLAGKHKMIAALERLRQGPESTAMPAQMSAFGINGKRSMAEMMMSHPPLEKRIAALQAR</sequence>
<gene>
    <name evidence="1" type="primary">htpX</name>
    <name type="ordered locus">Sputcn32_2334</name>
</gene>
<organism>
    <name type="scientific">Shewanella putrefaciens (strain CN-32 / ATCC BAA-453)</name>
    <dbReference type="NCBI Taxonomy" id="319224"/>
    <lineage>
        <taxon>Bacteria</taxon>
        <taxon>Pseudomonadati</taxon>
        <taxon>Pseudomonadota</taxon>
        <taxon>Gammaproteobacteria</taxon>
        <taxon>Alteromonadales</taxon>
        <taxon>Shewanellaceae</taxon>
        <taxon>Shewanella</taxon>
    </lineage>
</organism>
<feature type="chain" id="PRO_1000020937" description="Protease HtpX">
    <location>
        <begin position="1"/>
        <end position="287"/>
    </location>
</feature>
<feature type="transmembrane region" description="Helical" evidence="1">
    <location>
        <begin position="4"/>
        <end position="24"/>
    </location>
</feature>
<feature type="transmembrane region" description="Helical" evidence="1">
    <location>
        <begin position="33"/>
        <end position="53"/>
    </location>
</feature>
<feature type="transmembrane region" description="Helical" evidence="1">
    <location>
        <begin position="154"/>
        <end position="174"/>
    </location>
</feature>
<feature type="transmembrane region" description="Helical" evidence="1">
    <location>
        <begin position="195"/>
        <end position="215"/>
    </location>
</feature>
<feature type="active site" evidence="1">
    <location>
        <position position="140"/>
    </location>
</feature>
<feature type="binding site" evidence="1">
    <location>
        <position position="139"/>
    </location>
    <ligand>
        <name>Zn(2+)</name>
        <dbReference type="ChEBI" id="CHEBI:29105"/>
        <note>catalytic</note>
    </ligand>
</feature>
<feature type="binding site" evidence="1">
    <location>
        <position position="143"/>
    </location>
    <ligand>
        <name>Zn(2+)</name>
        <dbReference type="ChEBI" id="CHEBI:29105"/>
        <note>catalytic</note>
    </ligand>
</feature>
<feature type="binding site" evidence="1">
    <location>
        <position position="220"/>
    </location>
    <ligand>
        <name>Zn(2+)</name>
        <dbReference type="ChEBI" id="CHEBI:29105"/>
        <note>catalytic</note>
    </ligand>
</feature>
<reference key="1">
    <citation type="submission" date="2007-04" db="EMBL/GenBank/DDBJ databases">
        <title>Complete sequence of Shewanella putrefaciens CN-32.</title>
        <authorList>
            <consortium name="US DOE Joint Genome Institute"/>
            <person name="Copeland A."/>
            <person name="Lucas S."/>
            <person name="Lapidus A."/>
            <person name="Barry K."/>
            <person name="Detter J.C."/>
            <person name="Glavina del Rio T."/>
            <person name="Hammon N."/>
            <person name="Israni S."/>
            <person name="Dalin E."/>
            <person name="Tice H."/>
            <person name="Pitluck S."/>
            <person name="Chain P."/>
            <person name="Malfatti S."/>
            <person name="Shin M."/>
            <person name="Vergez L."/>
            <person name="Schmutz J."/>
            <person name="Larimer F."/>
            <person name="Land M."/>
            <person name="Hauser L."/>
            <person name="Kyrpides N."/>
            <person name="Mikhailova N."/>
            <person name="Romine M.F."/>
            <person name="Fredrickson J."/>
            <person name="Tiedje J."/>
            <person name="Richardson P."/>
        </authorList>
    </citation>
    <scope>NUCLEOTIDE SEQUENCE [LARGE SCALE GENOMIC DNA]</scope>
    <source>
        <strain>CN-32 / ATCC BAA-453</strain>
    </source>
</reference>
<name>HTPX_SHEPC</name>
<comment type="cofactor">
    <cofactor evidence="1">
        <name>Zn(2+)</name>
        <dbReference type="ChEBI" id="CHEBI:29105"/>
    </cofactor>
    <text evidence="1">Binds 1 zinc ion per subunit.</text>
</comment>
<comment type="subcellular location">
    <subcellularLocation>
        <location evidence="1">Cell inner membrane</location>
        <topology evidence="1">Multi-pass membrane protein</topology>
    </subcellularLocation>
</comment>
<comment type="similarity">
    <text evidence="1">Belongs to the peptidase M48B family.</text>
</comment>